<reference key="1">
    <citation type="journal article" date="2005" name="Science">
        <title>The transcriptional landscape of the mammalian genome.</title>
        <authorList>
            <person name="Carninci P."/>
            <person name="Kasukawa T."/>
            <person name="Katayama S."/>
            <person name="Gough J."/>
            <person name="Frith M.C."/>
            <person name="Maeda N."/>
            <person name="Oyama R."/>
            <person name="Ravasi T."/>
            <person name="Lenhard B."/>
            <person name="Wells C."/>
            <person name="Kodzius R."/>
            <person name="Shimokawa K."/>
            <person name="Bajic V.B."/>
            <person name="Brenner S.E."/>
            <person name="Batalov S."/>
            <person name="Forrest A.R."/>
            <person name="Zavolan M."/>
            <person name="Davis M.J."/>
            <person name="Wilming L.G."/>
            <person name="Aidinis V."/>
            <person name="Allen J.E."/>
            <person name="Ambesi-Impiombato A."/>
            <person name="Apweiler R."/>
            <person name="Aturaliya R.N."/>
            <person name="Bailey T.L."/>
            <person name="Bansal M."/>
            <person name="Baxter L."/>
            <person name="Beisel K.W."/>
            <person name="Bersano T."/>
            <person name="Bono H."/>
            <person name="Chalk A.M."/>
            <person name="Chiu K.P."/>
            <person name="Choudhary V."/>
            <person name="Christoffels A."/>
            <person name="Clutterbuck D.R."/>
            <person name="Crowe M.L."/>
            <person name="Dalla E."/>
            <person name="Dalrymple B.P."/>
            <person name="de Bono B."/>
            <person name="Della Gatta G."/>
            <person name="di Bernardo D."/>
            <person name="Down T."/>
            <person name="Engstrom P."/>
            <person name="Fagiolini M."/>
            <person name="Faulkner G."/>
            <person name="Fletcher C.F."/>
            <person name="Fukushima T."/>
            <person name="Furuno M."/>
            <person name="Futaki S."/>
            <person name="Gariboldi M."/>
            <person name="Georgii-Hemming P."/>
            <person name="Gingeras T.R."/>
            <person name="Gojobori T."/>
            <person name="Green R.E."/>
            <person name="Gustincich S."/>
            <person name="Harbers M."/>
            <person name="Hayashi Y."/>
            <person name="Hensch T.K."/>
            <person name="Hirokawa N."/>
            <person name="Hill D."/>
            <person name="Huminiecki L."/>
            <person name="Iacono M."/>
            <person name="Ikeo K."/>
            <person name="Iwama A."/>
            <person name="Ishikawa T."/>
            <person name="Jakt M."/>
            <person name="Kanapin A."/>
            <person name="Katoh M."/>
            <person name="Kawasawa Y."/>
            <person name="Kelso J."/>
            <person name="Kitamura H."/>
            <person name="Kitano H."/>
            <person name="Kollias G."/>
            <person name="Krishnan S.P."/>
            <person name="Kruger A."/>
            <person name="Kummerfeld S.K."/>
            <person name="Kurochkin I.V."/>
            <person name="Lareau L.F."/>
            <person name="Lazarevic D."/>
            <person name="Lipovich L."/>
            <person name="Liu J."/>
            <person name="Liuni S."/>
            <person name="McWilliam S."/>
            <person name="Madan Babu M."/>
            <person name="Madera M."/>
            <person name="Marchionni L."/>
            <person name="Matsuda H."/>
            <person name="Matsuzawa S."/>
            <person name="Miki H."/>
            <person name="Mignone F."/>
            <person name="Miyake S."/>
            <person name="Morris K."/>
            <person name="Mottagui-Tabar S."/>
            <person name="Mulder N."/>
            <person name="Nakano N."/>
            <person name="Nakauchi H."/>
            <person name="Ng P."/>
            <person name="Nilsson R."/>
            <person name="Nishiguchi S."/>
            <person name="Nishikawa S."/>
            <person name="Nori F."/>
            <person name="Ohara O."/>
            <person name="Okazaki Y."/>
            <person name="Orlando V."/>
            <person name="Pang K.C."/>
            <person name="Pavan W.J."/>
            <person name="Pavesi G."/>
            <person name="Pesole G."/>
            <person name="Petrovsky N."/>
            <person name="Piazza S."/>
            <person name="Reed J."/>
            <person name="Reid J.F."/>
            <person name="Ring B.Z."/>
            <person name="Ringwald M."/>
            <person name="Rost B."/>
            <person name="Ruan Y."/>
            <person name="Salzberg S.L."/>
            <person name="Sandelin A."/>
            <person name="Schneider C."/>
            <person name="Schoenbach C."/>
            <person name="Sekiguchi K."/>
            <person name="Semple C.A."/>
            <person name="Seno S."/>
            <person name="Sessa L."/>
            <person name="Sheng Y."/>
            <person name="Shibata Y."/>
            <person name="Shimada H."/>
            <person name="Shimada K."/>
            <person name="Silva D."/>
            <person name="Sinclair B."/>
            <person name="Sperling S."/>
            <person name="Stupka E."/>
            <person name="Sugiura K."/>
            <person name="Sultana R."/>
            <person name="Takenaka Y."/>
            <person name="Taki K."/>
            <person name="Tammoja K."/>
            <person name="Tan S.L."/>
            <person name="Tang S."/>
            <person name="Taylor M.S."/>
            <person name="Tegner J."/>
            <person name="Teichmann S.A."/>
            <person name="Ueda H.R."/>
            <person name="van Nimwegen E."/>
            <person name="Verardo R."/>
            <person name="Wei C.L."/>
            <person name="Yagi K."/>
            <person name="Yamanishi H."/>
            <person name="Zabarovsky E."/>
            <person name="Zhu S."/>
            <person name="Zimmer A."/>
            <person name="Hide W."/>
            <person name="Bult C."/>
            <person name="Grimmond S.M."/>
            <person name="Teasdale R.D."/>
            <person name="Liu E.T."/>
            <person name="Brusic V."/>
            <person name="Quackenbush J."/>
            <person name="Wahlestedt C."/>
            <person name="Mattick J.S."/>
            <person name="Hume D.A."/>
            <person name="Kai C."/>
            <person name="Sasaki D."/>
            <person name="Tomaru Y."/>
            <person name="Fukuda S."/>
            <person name="Kanamori-Katayama M."/>
            <person name="Suzuki M."/>
            <person name="Aoki J."/>
            <person name="Arakawa T."/>
            <person name="Iida J."/>
            <person name="Imamura K."/>
            <person name="Itoh M."/>
            <person name="Kato T."/>
            <person name="Kawaji H."/>
            <person name="Kawagashira N."/>
            <person name="Kawashima T."/>
            <person name="Kojima M."/>
            <person name="Kondo S."/>
            <person name="Konno H."/>
            <person name="Nakano K."/>
            <person name="Ninomiya N."/>
            <person name="Nishio T."/>
            <person name="Okada M."/>
            <person name="Plessy C."/>
            <person name="Shibata K."/>
            <person name="Shiraki T."/>
            <person name="Suzuki S."/>
            <person name="Tagami M."/>
            <person name="Waki K."/>
            <person name="Watahiki A."/>
            <person name="Okamura-Oho Y."/>
            <person name="Suzuki H."/>
            <person name="Kawai J."/>
            <person name="Hayashizaki Y."/>
        </authorList>
    </citation>
    <scope>NUCLEOTIDE SEQUENCE [LARGE SCALE MRNA]</scope>
    <source>
        <strain>C57BL/6J</strain>
        <tissue>Testis</tissue>
    </source>
</reference>
<reference key="2">
    <citation type="journal article" date="2009" name="PLoS Biol.">
        <title>Lineage-specific biology revealed by a finished genome assembly of the mouse.</title>
        <authorList>
            <person name="Church D.M."/>
            <person name="Goodstadt L."/>
            <person name="Hillier L.W."/>
            <person name="Zody M.C."/>
            <person name="Goldstein S."/>
            <person name="She X."/>
            <person name="Bult C.J."/>
            <person name="Agarwala R."/>
            <person name="Cherry J.L."/>
            <person name="DiCuccio M."/>
            <person name="Hlavina W."/>
            <person name="Kapustin Y."/>
            <person name="Meric P."/>
            <person name="Maglott D."/>
            <person name="Birtle Z."/>
            <person name="Marques A.C."/>
            <person name="Graves T."/>
            <person name="Zhou S."/>
            <person name="Teague B."/>
            <person name="Potamousis K."/>
            <person name="Churas C."/>
            <person name="Place M."/>
            <person name="Herschleb J."/>
            <person name="Runnheim R."/>
            <person name="Forrest D."/>
            <person name="Amos-Landgraf J."/>
            <person name="Schwartz D.C."/>
            <person name="Cheng Z."/>
            <person name="Lindblad-Toh K."/>
            <person name="Eichler E.E."/>
            <person name="Ponting C.P."/>
        </authorList>
    </citation>
    <scope>NUCLEOTIDE SEQUENCE [LARGE SCALE GENOMIC DNA]</scope>
    <source>
        <strain>C57BL/6J</strain>
    </source>
</reference>
<reference key="3">
    <citation type="journal article" date="2004" name="Genome Res.">
        <title>The status, quality, and expansion of the NIH full-length cDNA project: the Mammalian Gene Collection (MGC).</title>
        <authorList>
            <consortium name="The MGC Project Team"/>
        </authorList>
    </citation>
    <scope>NUCLEOTIDE SEQUENCE [LARGE SCALE MRNA]</scope>
    <source>
        <tissue>Testis</tissue>
    </source>
</reference>
<proteinExistence type="evidence at transcript level"/>
<dbReference type="EMBL" id="AK006591">
    <property type="protein sequence ID" value="BAB24663.1"/>
    <property type="molecule type" value="mRNA"/>
</dbReference>
<dbReference type="EMBL" id="BX284634">
    <property type="status" value="NOT_ANNOTATED_CDS"/>
    <property type="molecule type" value="Genomic_DNA"/>
</dbReference>
<dbReference type="EMBL" id="BC137683">
    <property type="protein sequence ID" value="AAI37684.1"/>
    <property type="molecule type" value="mRNA"/>
</dbReference>
<dbReference type="CCDS" id="CCDS48763.1"/>
<dbReference type="RefSeq" id="NP_001156993.1">
    <property type="nucleotide sequence ID" value="NM_001163521.1"/>
</dbReference>
<dbReference type="RefSeq" id="NP_082780.1">
    <property type="nucleotide sequence ID" value="NM_028504.1"/>
</dbReference>
<dbReference type="RefSeq" id="XP_006514881.1">
    <property type="nucleotide sequence ID" value="XM_006514818.3"/>
</dbReference>
<dbReference type="SMR" id="Q5M6W3"/>
<dbReference type="FunCoup" id="Q5M6W3">
    <property type="interactions" value="27"/>
</dbReference>
<dbReference type="STRING" id="10090.ENSMUSP00000020753"/>
<dbReference type="iPTMnet" id="Q5M6W3"/>
<dbReference type="PhosphoSitePlus" id="Q5M6W3"/>
<dbReference type="PaxDb" id="10090-ENSMUSP00000020753"/>
<dbReference type="ProteomicsDB" id="283299"/>
<dbReference type="Antibodypedia" id="30304">
    <property type="antibodies" value="19 antibodies from 8 providers"/>
</dbReference>
<dbReference type="DNASU" id="73324"/>
<dbReference type="Ensembl" id="ENSMUST00000020753.4">
    <property type="protein sequence ID" value="ENSMUSP00000020753.4"/>
    <property type="gene ID" value="ENSMUSG00000020461.11"/>
</dbReference>
<dbReference type="GeneID" id="73324"/>
<dbReference type="KEGG" id="mmu:73324"/>
<dbReference type="UCSC" id="uc007ihi.2">
    <property type="organism name" value="mouse"/>
</dbReference>
<dbReference type="AGR" id="MGI:1920574"/>
<dbReference type="CTD" id="130162"/>
<dbReference type="MGI" id="MGI:1920574">
    <property type="gene designation" value="Clhc1"/>
</dbReference>
<dbReference type="VEuPathDB" id="HostDB:ENSMUSG00000020461"/>
<dbReference type="eggNOG" id="KOG0985">
    <property type="taxonomic scope" value="Eukaryota"/>
</dbReference>
<dbReference type="GeneTree" id="ENSGT00950000183166"/>
<dbReference type="HOGENOM" id="CLU_033164_0_0_1"/>
<dbReference type="InParanoid" id="Q5M6W3"/>
<dbReference type="OrthoDB" id="2113814at2759"/>
<dbReference type="PhylomeDB" id="Q5M6W3"/>
<dbReference type="TreeFam" id="TF328858"/>
<dbReference type="BioGRID-ORCS" id="73324">
    <property type="hits" value="2 hits in 77 CRISPR screens"/>
</dbReference>
<dbReference type="ChiTaRS" id="Clhc1">
    <property type="organism name" value="mouse"/>
</dbReference>
<dbReference type="PRO" id="PR:Q5M6W3"/>
<dbReference type="Proteomes" id="UP000000589">
    <property type="component" value="Chromosome 11"/>
</dbReference>
<dbReference type="RNAct" id="Q5M6W3">
    <property type="molecule type" value="protein"/>
</dbReference>
<dbReference type="Bgee" id="ENSMUSG00000020461">
    <property type="expression patterns" value="Expressed in spermatocyte and 31 other cell types or tissues"/>
</dbReference>
<dbReference type="ExpressionAtlas" id="Q5M6W3">
    <property type="expression patterns" value="baseline and differential"/>
</dbReference>
<dbReference type="Gene3D" id="1.25.40.30">
    <property type="match status" value="1"/>
</dbReference>
<dbReference type="InterPro" id="IPR016024">
    <property type="entry name" value="ARM-type_fold"/>
</dbReference>
<dbReference type="InterPro" id="IPR012331">
    <property type="entry name" value="Clathrin_H-chain_linker"/>
</dbReference>
<dbReference type="InterPro" id="IPR017212">
    <property type="entry name" value="CLHC1"/>
</dbReference>
<dbReference type="InterPro" id="IPR032755">
    <property type="entry name" value="TSNAXIP1_N"/>
</dbReference>
<dbReference type="PANTHER" id="PTHR10292:SF11">
    <property type="entry name" value="CLATHRIN HEAVY CHAIN LINKER DOMAIN-CONTAINING PROTEIN 1"/>
    <property type="match status" value="1"/>
</dbReference>
<dbReference type="PANTHER" id="PTHR10292">
    <property type="entry name" value="CLATHRIN HEAVY CHAIN RELATED"/>
    <property type="match status" value="1"/>
</dbReference>
<dbReference type="Pfam" id="PF13838">
    <property type="entry name" value="Clathrin_H_link"/>
    <property type="match status" value="1"/>
</dbReference>
<dbReference type="Pfam" id="PF15739">
    <property type="entry name" value="TSNAXIP1_N"/>
    <property type="match status" value="1"/>
</dbReference>
<dbReference type="PIRSF" id="PIRSF037469">
    <property type="entry name" value="Clathrin_H-chain-rel"/>
    <property type="match status" value="1"/>
</dbReference>
<dbReference type="SUPFAM" id="SSF48371">
    <property type="entry name" value="ARM repeat"/>
    <property type="match status" value="1"/>
</dbReference>
<accession>Q5M6W3</accession>
<accession>B2RQ04</accession>
<accession>Q9D9Q4</accession>
<keyword id="KW-0175">Coiled coil</keyword>
<keyword id="KW-1185">Reference proteome</keyword>
<evidence type="ECO:0000255" key="1"/>
<evidence type="ECO:0000305" key="2"/>
<sequence length="596" mass="69414">MSVQEVNTHAVLPPIVSRNDKEFLESIQRYITTETKRVGCKEEGPADEYYTIYRNVFDKFSATDRKIIFQVIDYVSAYKSILTAIKKEYDAFIETIKKGRRTAFYLHGKLKVLAKEPTALVYHQRRAIQLEAKMRIIENNSTAIQLQIDQMKQLRMEYDKKEVKLCAPSRQLWKPIPGMTLQDSVNLEALNKHKQYLEDKYIKLKQDMSTMYVPAQKKAELDEEMVVLLNRRDIAENLKKDRQFRHQRLQVISHTLTPWMKQNMRISFQDVMERIRKTKAIYGYDNIVDEIFEDDPNKKKEAIVMLHYIERFNDLISLGEYERAACFAANSPKRILQNTSTMNKFKAIGKIRGKPLPLLLFFEAIFNTSQAFKRPINADLTMEGIKCGLSEERLDLVTHWVTQEKLTFSEKAGDIIFAYGEQHTYHKPRCLALAQIIYNECGLHRKALLCLCKQGQIHEAMEHIQQSKDINTDDLIQLITACPQIDLIRCLTQERNEKPPFLSFGLAVLHMFSVDMKKVGMRLLQEVSKGEKDVIEHLVMSDLFCSLEKWQEIANICLQNGFKILFNDIMSILRSQAGVSEISEDDTTNIMEHVFW</sequence>
<gene>
    <name type="primary">Clhc1</name>
</gene>
<organism>
    <name type="scientific">Mus musculus</name>
    <name type="common">Mouse</name>
    <dbReference type="NCBI Taxonomy" id="10090"/>
    <lineage>
        <taxon>Eukaryota</taxon>
        <taxon>Metazoa</taxon>
        <taxon>Chordata</taxon>
        <taxon>Craniata</taxon>
        <taxon>Vertebrata</taxon>
        <taxon>Euteleostomi</taxon>
        <taxon>Mammalia</taxon>
        <taxon>Eutheria</taxon>
        <taxon>Euarchontoglires</taxon>
        <taxon>Glires</taxon>
        <taxon>Rodentia</taxon>
        <taxon>Myomorpha</taxon>
        <taxon>Muroidea</taxon>
        <taxon>Muridae</taxon>
        <taxon>Murinae</taxon>
        <taxon>Mus</taxon>
        <taxon>Mus</taxon>
    </lineage>
</organism>
<name>CLHC1_MOUSE</name>
<feature type="chain" id="PRO_0000325872" description="Clathrin heavy chain linker domain-containing protein 1">
    <location>
        <begin position="1"/>
        <end position="596"/>
    </location>
</feature>
<feature type="coiled-coil region" evidence="1">
    <location>
        <begin position="129"/>
        <end position="241"/>
    </location>
</feature>
<feature type="sequence conflict" description="In Ref. 1; BAB24663." evidence="2" ref="1">
    <original>T</original>
    <variation>K</variation>
    <location>
        <position position="118"/>
    </location>
</feature>
<protein>
    <recommendedName>
        <fullName>Clathrin heavy chain linker domain-containing protein 1</fullName>
    </recommendedName>
</protein>